<evidence type="ECO:0000250" key="1"/>
<evidence type="ECO:0000250" key="2">
    <source>
        <dbReference type="UniProtKB" id="A6QG31"/>
    </source>
</evidence>
<evidence type="ECO:0000250" key="3">
    <source>
        <dbReference type="UniProtKB" id="Q7A152"/>
    </source>
</evidence>
<evidence type="ECO:0000250" key="4">
    <source>
        <dbReference type="UniProtKB" id="Q7A655"/>
    </source>
</evidence>
<evidence type="ECO:0000255" key="5">
    <source>
        <dbReference type="PROSITE-ProRule" id="PRU00337"/>
    </source>
</evidence>
<evidence type="ECO:0000255" key="6">
    <source>
        <dbReference type="PROSITE-ProRule" id="PRU00477"/>
    </source>
</evidence>
<evidence type="ECO:0000256" key="7">
    <source>
        <dbReference type="SAM" id="MobiDB-lite"/>
    </source>
</evidence>
<evidence type="ECO:0000305" key="8"/>
<gene>
    <name type="primary">isdA</name>
    <name type="synonym">frpA</name>
    <name type="synonym">stbA</name>
    <name type="ordered locus">SAS1064</name>
</gene>
<name>ISDA_STAAS</name>
<proteinExistence type="inferred from homology"/>
<sequence length="350" mass="38746">MTKHYLNSKYQSEQRSSAMKKITMGTASIILGSLVYIGADSQQVNAATEATNATNNQSTQVSQATSQPINFQVQKDGSSEKSHMDDYMQHPGKVIKQNNKYYFQTVLNNASFWKEYKFYNANNQELATTVVNDNKKADTRTINVAVEPGYKSLTTKVHIVVPQINYNHRYTTHLEFEKAIPTLADAAKPNNVKPVQPKPAQPKTPTEQTKPVQPKVEKVKPTVTTTSKVEDNHSTKVVSTDTTKDQTKTQTAHTVKTAQTAQEQNKVQTPVKDVATAKSESNNQAVSDNKSQQTNKVTKHNETPKQASKAKELPKTGLTSVDNFISTVAFATLALLGSLSLLLFKRKESK</sequence>
<protein>
    <recommendedName>
        <fullName>Iron-regulated surface determinant protein A</fullName>
    </recommendedName>
    <alternativeName>
        <fullName>Fur-regulated protein A</fullName>
    </alternativeName>
    <alternativeName>
        <fullName>Staphylococcal transferrin-binding protein A</fullName>
    </alternativeName>
</protein>
<comment type="function">
    <text evidence="2 3">Cell wall-anchored surface receptor that participates in the extraction of heme from oxidized methemoglobin/metHb to enable growth on hemoglobin as a sole iron source (By similarity). Receives heme from IsdB and transfers it to IsdC (By similarity). Also plays a role in the inhibition of host immune response. Protects S.aureus against the bactericidal protease activity of apolactoferrin. Decreases bacterial cellular hydrophobicity, which renders S.aureus resistant to bactericidal human skin fatty acids as well as to beta-defensins and cathelicidin. Also binds fibronectin and chains B-beta and gamma of fibrinogen, promoting clumping of S.aureus with fibrinogen. Involved in adherence of S.aureus to human desquamated nasal epithelial cells and is required for nasal colonization (By similarity).</text>
</comment>
<comment type="subunit">
    <text evidence="2 3">Monomer. Interacts with IsdC (By similarity). Interacts with IsdB (By similarity).</text>
</comment>
<comment type="subcellular location">
    <subcellularLocation>
        <location evidence="2">Secreted</location>
        <location evidence="2">Cell wall</location>
        <topology evidence="2">Peptidoglycan-anchor</topology>
    </subcellularLocation>
    <text evidence="2">Encodes an LPXTG motif-containing sorting signal that targets to the cell wall, which is catalyzed by sortase A.</text>
</comment>
<comment type="induction">
    <text evidence="1">Repressed by fur in the presence of iron.</text>
</comment>
<comment type="domain">
    <text evidence="1">The NEAT domain is responsible for binding Fe(3+) and Fe(2+) heme and fibrinogen. The NEAT domain is an inhibitor of apolactoferrin activity, while the C-domain confers resistance to bovine lactoferricin (By similarity).</text>
</comment>
<comment type="similarity">
    <text evidence="8">Belongs to the IsdA family.</text>
</comment>
<accession>Q6GA85</accession>
<feature type="signal peptide" evidence="1">
    <location>
        <begin position="1"/>
        <end position="46"/>
    </location>
</feature>
<feature type="chain" id="PRO_0000046092" description="Iron-regulated surface determinant protein A">
    <location>
        <begin position="47"/>
        <end position="316"/>
    </location>
</feature>
<feature type="propeptide" id="PRO_0000046093" description="Removed by sortase A" evidence="6">
    <location>
        <begin position="317"/>
        <end position="350"/>
    </location>
</feature>
<feature type="domain" description="NEAT" evidence="5">
    <location>
        <begin position="62"/>
        <end position="184"/>
    </location>
</feature>
<feature type="region of interest" description="Disordered" evidence="7">
    <location>
        <begin position="188"/>
        <end position="314"/>
    </location>
</feature>
<feature type="short sequence motif" description="LPXTG sorting signal" evidence="6">
    <location>
        <begin position="313"/>
        <end position="317"/>
    </location>
</feature>
<feature type="compositionally biased region" description="Low complexity" evidence="7">
    <location>
        <begin position="203"/>
        <end position="214"/>
    </location>
</feature>
<feature type="compositionally biased region" description="Polar residues" evidence="7">
    <location>
        <begin position="252"/>
        <end position="268"/>
    </location>
</feature>
<feature type="compositionally biased region" description="Polar residues" evidence="7">
    <location>
        <begin position="278"/>
        <end position="296"/>
    </location>
</feature>
<feature type="compositionally biased region" description="Basic and acidic residues" evidence="7">
    <location>
        <begin position="299"/>
        <end position="314"/>
    </location>
</feature>
<feature type="binding site" evidence="1">
    <location>
        <position position="75"/>
    </location>
    <ligand>
        <name>heme</name>
        <dbReference type="ChEBI" id="CHEBI:30413"/>
    </ligand>
</feature>
<feature type="binding site" evidence="1">
    <location>
        <position position="82"/>
    </location>
    <ligand>
        <name>heme</name>
        <dbReference type="ChEBI" id="CHEBI:30413"/>
    </ligand>
</feature>
<feature type="binding site" description="axial binding residue" evidence="4">
    <location>
        <position position="166"/>
    </location>
    <ligand>
        <name>heme</name>
        <dbReference type="ChEBI" id="CHEBI:30413"/>
    </ligand>
    <ligandPart>
        <name>Fe</name>
        <dbReference type="ChEBI" id="CHEBI:18248"/>
    </ligandPart>
</feature>
<feature type="modified residue" description="Pentaglycyl murein peptidoglycan amidated threonine" evidence="6">
    <location>
        <position position="316"/>
    </location>
</feature>
<keyword id="KW-0134">Cell wall</keyword>
<keyword id="KW-0349">Heme</keyword>
<keyword id="KW-0408">Iron</keyword>
<keyword id="KW-0479">Metal-binding</keyword>
<keyword id="KW-0572">Peptidoglycan-anchor</keyword>
<keyword id="KW-0964">Secreted</keyword>
<keyword id="KW-0732">Signal</keyword>
<organism>
    <name type="scientific">Staphylococcus aureus (strain MSSA476)</name>
    <dbReference type="NCBI Taxonomy" id="282459"/>
    <lineage>
        <taxon>Bacteria</taxon>
        <taxon>Bacillati</taxon>
        <taxon>Bacillota</taxon>
        <taxon>Bacilli</taxon>
        <taxon>Bacillales</taxon>
        <taxon>Staphylococcaceae</taxon>
        <taxon>Staphylococcus</taxon>
    </lineage>
</organism>
<reference key="1">
    <citation type="journal article" date="2004" name="Proc. Natl. Acad. Sci. U.S.A.">
        <title>Complete genomes of two clinical Staphylococcus aureus strains: evidence for the rapid evolution of virulence and drug resistance.</title>
        <authorList>
            <person name="Holden M.T.G."/>
            <person name="Feil E.J."/>
            <person name="Lindsay J.A."/>
            <person name="Peacock S.J."/>
            <person name="Day N.P.J."/>
            <person name="Enright M.C."/>
            <person name="Foster T.J."/>
            <person name="Moore C.E."/>
            <person name="Hurst L."/>
            <person name="Atkin R."/>
            <person name="Barron A."/>
            <person name="Bason N."/>
            <person name="Bentley S.D."/>
            <person name="Chillingworth C."/>
            <person name="Chillingworth T."/>
            <person name="Churcher C."/>
            <person name="Clark L."/>
            <person name="Corton C."/>
            <person name="Cronin A."/>
            <person name="Doggett J."/>
            <person name="Dowd L."/>
            <person name="Feltwell T."/>
            <person name="Hance Z."/>
            <person name="Harris B."/>
            <person name="Hauser H."/>
            <person name="Holroyd S."/>
            <person name="Jagels K."/>
            <person name="James K.D."/>
            <person name="Lennard N."/>
            <person name="Line A."/>
            <person name="Mayes R."/>
            <person name="Moule S."/>
            <person name="Mungall K."/>
            <person name="Ormond D."/>
            <person name="Quail M.A."/>
            <person name="Rabbinowitsch E."/>
            <person name="Rutherford K.M."/>
            <person name="Sanders M."/>
            <person name="Sharp S."/>
            <person name="Simmonds M."/>
            <person name="Stevens K."/>
            <person name="Whitehead S."/>
            <person name="Barrell B.G."/>
            <person name="Spratt B.G."/>
            <person name="Parkhill J."/>
        </authorList>
    </citation>
    <scope>NUCLEOTIDE SEQUENCE [LARGE SCALE GENOMIC DNA]</scope>
    <source>
        <strain>MSSA476</strain>
    </source>
</reference>
<dbReference type="EMBL" id="BX571857">
    <property type="protein sequence ID" value="CAG42838.1"/>
    <property type="molecule type" value="Genomic_DNA"/>
</dbReference>
<dbReference type="RefSeq" id="WP_000160859.1">
    <property type="nucleotide sequence ID" value="NC_002953.3"/>
</dbReference>
<dbReference type="SMR" id="Q6GA85"/>
<dbReference type="KEGG" id="sas:SAS1064"/>
<dbReference type="HOGENOM" id="CLU_068057_0_0_9"/>
<dbReference type="PRO" id="PR:Q6GA85"/>
<dbReference type="GO" id="GO:0005576">
    <property type="term" value="C:extracellular region"/>
    <property type="evidence" value="ECO:0007669"/>
    <property type="project" value="UniProtKB-KW"/>
</dbReference>
<dbReference type="GO" id="GO:0046872">
    <property type="term" value="F:metal ion binding"/>
    <property type="evidence" value="ECO:0007669"/>
    <property type="project" value="UniProtKB-KW"/>
</dbReference>
<dbReference type="CDD" id="cd06920">
    <property type="entry name" value="NEAT"/>
    <property type="match status" value="1"/>
</dbReference>
<dbReference type="Gene3D" id="2.60.40.1850">
    <property type="match status" value="1"/>
</dbReference>
<dbReference type="InterPro" id="IPR050436">
    <property type="entry name" value="IsdA"/>
</dbReference>
<dbReference type="InterPro" id="IPR019931">
    <property type="entry name" value="LPXTG_anchor"/>
</dbReference>
<dbReference type="InterPro" id="IPR006635">
    <property type="entry name" value="NEAT_dom"/>
</dbReference>
<dbReference type="InterPro" id="IPR037250">
    <property type="entry name" value="NEAT_dom_sf"/>
</dbReference>
<dbReference type="NCBIfam" id="TIGR01167">
    <property type="entry name" value="LPXTG_anchor"/>
    <property type="match status" value="1"/>
</dbReference>
<dbReference type="PANTHER" id="PTHR37824">
    <property type="entry name" value="IRON-REGULATED SURFACE DETERMINANT PROTEIN C"/>
    <property type="match status" value="1"/>
</dbReference>
<dbReference type="PANTHER" id="PTHR37824:SF1">
    <property type="entry name" value="IRON-REGULATED SURFACE DETERMINANT PROTEIN C"/>
    <property type="match status" value="1"/>
</dbReference>
<dbReference type="Pfam" id="PF00746">
    <property type="entry name" value="Gram_pos_anchor"/>
    <property type="match status" value="1"/>
</dbReference>
<dbReference type="Pfam" id="PF05031">
    <property type="entry name" value="NEAT"/>
    <property type="match status" value="1"/>
</dbReference>
<dbReference type="SMART" id="SM00725">
    <property type="entry name" value="NEAT"/>
    <property type="match status" value="1"/>
</dbReference>
<dbReference type="SUPFAM" id="SSF158911">
    <property type="entry name" value="NEAT domain-like"/>
    <property type="match status" value="1"/>
</dbReference>
<dbReference type="PROSITE" id="PS50847">
    <property type="entry name" value="GRAM_POS_ANCHORING"/>
    <property type="match status" value="1"/>
</dbReference>
<dbReference type="PROSITE" id="PS50978">
    <property type="entry name" value="NEAT"/>
    <property type="match status" value="1"/>
</dbReference>